<organism>
    <name type="scientific">Lactococcus phage p2</name>
    <name type="common">Lactococcus lactis bacteriophage p2</name>
    <dbReference type="NCBI Taxonomy" id="254252"/>
    <lineage>
        <taxon>Viruses</taxon>
        <taxon>Duplodnaviria</taxon>
        <taxon>Heunggongvirae</taxon>
        <taxon>Uroviricota</taxon>
        <taxon>Caudoviricetes</taxon>
        <taxon>Skunavirus</taxon>
    </lineage>
</organism>
<dbReference type="EMBL" id="GQ979703">
    <property type="protein sequence ID" value="ADC80087.1"/>
    <property type="molecule type" value="Genomic_DNA"/>
</dbReference>
<dbReference type="RefSeq" id="YP_009613492.1">
    <property type="nucleotide sequence ID" value="NC_042024.1"/>
</dbReference>
<dbReference type="PDB" id="3D8L">
    <property type="method" value="X-ray"/>
    <property type="resolution" value="2.90 A"/>
    <property type="chains" value="A/B/C=1-91"/>
</dbReference>
<dbReference type="PDBsum" id="3D8L"/>
<dbReference type="SMR" id="D3WAD0"/>
<dbReference type="GeneID" id="40089867"/>
<dbReference type="EvolutionaryTrace" id="D3WAD0"/>
<dbReference type="Proteomes" id="UP000002348">
    <property type="component" value="Segment"/>
</dbReference>
<dbReference type="GO" id="GO:0098003">
    <property type="term" value="P:viral tail assembly"/>
    <property type="evidence" value="ECO:0007669"/>
    <property type="project" value="UniProtKB-KW"/>
</dbReference>
<dbReference type="Gene3D" id="1.10.8.940">
    <property type="entry name" value="Uncharacterised protein, phage p2 ORF12"/>
    <property type="match status" value="1"/>
</dbReference>
<dbReference type="InterPro" id="IPR048803">
    <property type="entry name" value="Gp12"/>
</dbReference>
<dbReference type="InterPro" id="IPR043077">
    <property type="entry name" value="Gp12_sf"/>
</dbReference>
<dbReference type="Pfam" id="PF20962">
    <property type="entry name" value="Phage_p2_ORF12"/>
    <property type="match status" value="1"/>
</dbReference>
<name>GP12_BPLP2</name>
<proteinExistence type="evidence at protein level"/>
<comment type="function">
    <text evidence="3">Probable chaperone for the tape measure protein. Might help to maintain the tape measure protein in solution during tail assembly.</text>
</comment>
<comment type="subunit">
    <text evidence="1">Homohexamer. Further self-assembles as a spiral.</text>
</comment>
<comment type="induction">
    <text evidence="1">Expressed in the late phase of the viral replicative cycle.</text>
</comment>
<comment type="similarity">
    <text evidence="2">Belongs to the skunalikevirus chaperone protein gp12 family.</text>
</comment>
<keyword id="KW-0002">3D-structure</keyword>
<keyword id="KW-0426">Late protein</keyword>
<keyword id="KW-1188">Viral release from host cell</keyword>
<keyword id="KW-1245">Viral tail assembly</keyword>
<sequence length="91" mass="10626">MAKQLSTARKFKMITGKDLFQQQKAMDTELKKEDGEITDLMEFVQYGLYLALFQDNIVKAKSDFSDFRSSFEFDTDGKGLKELVELWQKEI</sequence>
<accession>D3WAD0</accession>
<feature type="chain" id="PRO_0000438232" description="Chaperone protein gp12">
    <location>
        <begin position="1"/>
        <end position="91"/>
    </location>
</feature>
<feature type="helix" evidence="5">
    <location>
        <begin position="7"/>
        <end position="15"/>
    </location>
</feature>
<feature type="helix" evidence="5">
    <location>
        <begin position="19"/>
        <end position="31"/>
    </location>
</feature>
<feature type="helix" evidence="5">
    <location>
        <begin position="37"/>
        <end position="53"/>
    </location>
</feature>
<feature type="helix" evidence="5">
    <location>
        <begin position="57"/>
        <end position="70"/>
    </location>
</feature>
<feature type="helix" evidence="5">
    <location>
        <begin position="80"/>
        <end position="88"/>
    </location>
</feature>
<evidence type="ECO:0000269" key="1">
    <source>
    </source>
</evidence>
<evidence type="ECO:0000305" key="2"/>
<evidence type="ECO:0000305" key="3">
    <source>
    </source>
</evidence>
<evidence type="ECO:0007744" key="4">
    <source>
        <dbReference type="PDB" id="3D8L"/>
    </source>
</evidence>
<evidence type="ECO:0007829" key="5">
    <source>
        <dbReference type="PDB" id="3D8L"/>
    </source>
</evidence>
<reference key="1">
    <citation type="submission" date="2010-02" db="EMBL/GenBank/DDBJ databases">
        <title>Complete genomic sequence of Lactococcus lactis phage p2.</title>
        <authorList>
            <person name="Tremblay D.M."/>
            <person name="Deveau H."/>
            <person name="Moineau S."/>
        </authorList>
    </citation>
    <scope>NUCLEOTIDE SEQUENCE [LARGE SCALE GENOMIC DNA]</scope>
</reference>
<reference evidence="4" key="2">
    <citation type="journal article" date="2009" name="J. Bacteriol.">
        <title>Crystal structure of ORF12 from Lactococcus lactis phage p2 identifies a tape measure protein chaperone.</title>
        <authorList>
            <person name="Siponen M."/>
            <person name="Sciara G."/>
            <person name="Villion M."/>
            <person name="Spinelli S."/>
            <person name="Lichiere J."/>
            <person name="Cambillau C."/>
            <person name="Moineau S."/>
            <person name="Campanacci V."/>
        </authorList>
    </citation>
    <scope>X-RAY CRYSTALLOGRAPHY (2.90 ANGSTROMS)</scope>
    <scope>FUNCTION</scope>
    <scope>SUBUNIT</scope>
    <scope>INDUCTION</scope>
</reference>
<organismHost>
    <name type="scientific">Lactococcus lactis</name>
    <dbReference type="NCBI Taxonomy" id="1358"/>
</organismHost>
<protein>
    <recommendedName>
        <fullName evidence="2">Chaperone protein gp12</fullName>
    </recommendedName>
    <alternativeName>
        <fullName evidence="2">Gene product 12</fullName>
        <shortName evidence="2">gp12</shortName>
    </alternativeName>
</protein>